<keyword id="KW-0010">Activator</keyword>
<keyword id="KW-0238">DNA-binding</keyword>
<keyword id="KW-0539">Nucleus</keyword>
<keyword id="KW-1185">Reference proteome</keyword>
<keyword id="KW-0346">Stress response</keyword>
<keyword id="KW-0804">Transcription</keyword>
<keyword id="KW-0805">Transcription regulation</keyword>
<accession>C4V6H6</accession>
<comment type="function">
    <text evidence="1">DNA-binding transcription factor that specifically binds heat shock promoter elements (HSE) and activates transcription.</text>
</comment>
<comment type="subunit">
    <text evidence="1">Homotrimer (By similarity). Homotrimerization increases the affinity of HSF1 to DNA (By similarity).</text>
</comment>
<comment type="subcellular location">
    <subcellularLocation>
        <location evidence="1">Nucleus</location>
    </subcellularLocation>
</comment>
<comment type="similarity">
    <text evidence="4">Belongs to the HSF family.</text>
</comment>
<reference key="1">
    <citation type="journal article" date="2009" name="PLoS Pathog.">
        <title>Genomic analyses of the microsporidian Nosema ceranae, an emergent pathogen of honey bees.</title>
        <authorList>
            <person name="Cornman R.S."/>
            <person name="Chen Y.P."/>
            <person name="Schatz M.C."/>
            <person name="Street C."/>
            <person name="Zhao Y."/>
            <person name="Desany B."/>
            <person name="Egholm M."/>
            <person name="Hutchison S."/>
            <person name="Pettis J.S."/>
            <person name="Lipkin W.I."/>
            <person name="Evans J.D."/>
        </authorList>
    </citation>
    <scope>NUCLEOTIDE SEQUENCE [LARGE SCALE GENOMIC DNA]</scope>
    <source>
        <strain>BRL01</strain>
    </source>
</reference>
<name>HSF_VAIC1</name>
<protein>
    <recommendedName>
        <fullName evidence="4">Probable heat shock transcription factor</fullName>
        <shortName evidence="4">HSTF</shortName>
    </recommendedName>
    <alternativeName>
        <fullName evidence="4">Heat shock factor protein</fullName>
        <shortName evidence="4">HSF</shortName>
    </alternativeName>
</protein>
<sequence>MKSDKTPKINKFIRRLYKIVNDNSFSEIQWTTDGLRFYITDKTAFMLNGLKYLSKTTEYSAFVRLLYVYGFSKSKSLNAYEEEYYHKNFKRDGDNLLPCIQRTVETKTTLLQKNTNRTPNQLQDLLQYLNNQNFKLEGEIKSLKDRVDQQDCTINGLVQLLTRIFRTNDSNKDMLLPLNITEHGSPINNELRINYDKNQVARLMADTPNIDGRLENTNIELSNNKNFLFDSDDEDSIYKTNFF</sequence>
<proteinExistence type="inferred from homology"/>
<evidence type="ECO:0000250" key="1">
    <source>
        <dbReference type="UniProtKB" id="P10961"/>
    </source>
</evidence>
<evidence type="ECO:0000250" key="2">
    <source>
        <dbReference type="UniProtKB" id="P22121"/>
    </source>
</evidence>
<evidence type="ECO:0000255" key="3"/>
<evidence type="ECO:0000305" key="4"/>
<evidence type="ECO:0000312" key="5">
    <source>
        <dbReference type="EMBL" id="EEQ83147.1"/>
    </source>
</evidence>
<gene>
    <name evidence="4" type="primary">HSF</name>
    <name evidence="5" type="ORF">NCER_100004</name>
</gene>
<dbReference type="EMBL" id="ACOL01000001">
    <property type="protein sequence ID" value="EEQ83147.1"/>
    <property type="molecule type" value="Genomic_DNA"/>
</dbReference>
<dbReference type="RefSeq" id="XP_002996818.1">
    <property type="nucleotide sequence ID" value="XM_002996772.1"/>
</dbReference>
<dbReference type="SMR" id="C4V6H6"/>
<dbReference type="STRING" id="578460.C4V6H6"/>
<dbReference type="KEGG" id="nce:NCER_100004"/>
<dbReference type="VEuPathDB" id="MicrosporidiaDB:NCER_100004"/>
<dbReference type="HOGENOM" id="CLU_030308_8_1_1"/>
<dbReference type="InParanoid" id="C4V6H6"/>
<dbReference type="OMA" id="LMRWCDE"/>
<dbReference type="OrthoDB" id="7128at6029"/>
<dbReference type="Proteomes" id="UP000009082">
    <property type="component" value="Unassembled WGS sequence"/>
</dbReference>
<dbReference type="GO" id="GO:0005634">
    <property type="term" value="C:nucleus"/>
    <property type="evidence" value="ECO:0007669"/>
    <property type="project" value="UniProtKB-SubCell"/>
</dbReference>
<dbReference type="GO" id="GO:0003700">
    <property type="term" value="F:DNA-binding transcription factor activity"/>
    <property type="evidence" value="ECO:0007669"/>
    <property type="project" value="InterPro"/>
</dbReference>
<dbReference type="GO" id="GO:0043565">
    <property type="term" value="F:sequence-specific DNA binding"/>
    <property type="evidence" value="ECO:0007669"/>
    <property type="project" value="InterPro"/>
</dbReference>
<dbReference type="Gene3D" id="1.10.10.10">
    <property type="entry name" value="Winged helix-like DNA-binding domain superfamily/Winged helix DNA-binding domain"/>
    <property type="match status" value="1"/>
</dbReference>
<dbReference type="InterPro" id="IPR000232">
    <property type="entry name" value="HSF_DNA-bd"/>
</dbReference>
<dbReference type="InterPro" id="IPR036388">
    <property type="entry name" value="WH-like_DNA-bd_sf"/>
</dbReference>
<dbReference type="InterPro" id="IPR036390">
    <property type="entry name" value="WH_DNA-bd_sf"/>
</dbReference>
<dbReference type="PANTHER" id="PTHR10015">
    <property type="entry name" value="HEAT SHOCK TRANSCRIPTION FACTOR"/>
    <property type="match status" value="1"/>
</dbReference>
<dbReference type="PANTHER" id="PTHR10015:SF206">
    <property type="entry name" value="HSF-TYPE DNA-BINDING DOMAIN-CONTAINING PROTEIN"/>
    <property type="match status" value="1"/>
</dbReference>
<dbReference type="Pfam" id="PF00447">
    <property type="entry name" value="HSF_DNA-bind"/>
    <property type="match status" value="1"/>
</dbReference>
<dbReference type="SMART" id="SM00415">
    <property type="entry name" value="HSF"/>
    <property type="match status" value="1"/>
</dbReference>
<dbReference type="SUPFAM" id="SSF46785">
    <property type="entry name" value="Winged helix' DNA-binding domain"/>
    <property type="match status" value="1"/>
</dbReference>
<feature type="chain" id="PRO_0000388430" description="Probable heat shock transcription factor">
    <location>
        <begin position="1"/>
        <end position="243"/>
    </location>
</feature>
<feature type="DNA-binding region" evidence="3">
    <location>
        <begin position="9"/>
        <end position="102"/>
    </location>
</feature>
<feature type="region of interest" description="Involved in trimerization" evidence="2">
    <location>
        <begin position="121"/>
        <end position="164"/>
    </location>
</feature>
<organism>
    <name type="scientific">Vairimorpha ceranae (strain BRL01)</name>
    <name type="common">Microsporidian parasite</name>
    <name type="synonym">Nosema ceranae</name>
    <dbReference type="NCBI Taxonomy" id="578460"/>
    <lineage>
        <taxon>Eukaryota</taxon>
        <taxon>Fungi</taxon>
        <taxon>Fungi incertae sedis</taxon>
        <taxon>Microsporidia</taxon>
        <taxon>Nosematidae</taxon>
        <taxon>Vairimorpha</taxon>
    </lineage>
</organism>